<proteinExistence type="evidence at protein level"/>
<accession>P0DMZ2</accession>
<dbReference type="GO" id="GO:0005576">
    <property type="term" value="C:extracellular region"/>
    <property type="evidence" value="ECO:0007669"/>
    <property type="project" value="UniProtKB-SubCell"/>
</dbReference>
<dbReference type="GO" id="GO:0042151">
    <property type="term" value="C:nematocyst"/>
    <property type="evidence" value="ECO:0007669"/>
    <property type="project" value="UniProtKB-SubCell"/>
</dbReference>
<dbReference type="GO" id="GO:0019871">
    <property type="term" value="F:sodium channel inhibitor activity"/>
    <property type="evidence" value="ECO:0007669"/>
    <property type="project" value="InterPro"/>
</dbReference>
<dbReference type="GO" id="GO:0090729">
    <property type="term" value="F:toxin activity"/>
    <property type="evidence" value="ECO:0007669"/>
    <property type="project" value="UniProtKB-KW"/>
</dbReference>
<dbReference type="InterPro" id="IPR016330">
    <property type="entry name" value="Neurotoxin_3_Actiniidae"/>
</dbReference>
<dbReference type="InterPro" id="IPR012509">
    <property type="entry name" value="Neurotoxin_3_Anemonia"/>
</dbReference>
<dbReference type="Pfam" id="PF08098">
    <property type="entry name" value="ATX_III"/>
    <property type="match status" value="1"/>
</dbReference>
<dbReference type="PIRSF" id="PIRSF001906">
    <property type="entry name" value="Neurotoxin_III_Actiniidae"/>
    <property type="match status" value="1"/>
</dbReference>
<name>STX_DOFAR</name>
<protein>
    <recommendedName>
        <fullName evidence="4">Delta-actitoxin-Dar1b</fullName>
        <shortName evidence="4">Delta-AITX-Dar1b</shortName>
    </recommendedName>
    <alternativeName>
        <fullName evidence="3">Da II</fullName>
    </alternativeName>
    <component>
        <recommendedName>
            <fullName evidence="4">Delta-actitoxin-Dar1a</fullName>
            <shortName evidence="4">Delta-AITX-Dar1a</shortName>
        </recommendedName>
        <alternativeName>
            <fullName evidence="3">Da I</fullName>
        </alternativeName>
    </component>
</protein>
<feature type="peptide" id="PRO_0000433701" description="Delta-actitoxin-Dar1b">
    <location>
        <begin position="1"/>
        <end position="31"/>
    </location>
</feature>
<feature type="peptide" id="PRO_0000433702" description="Delta-actitoxin-Dar1a">
    <location>
        <begin position="2"/>
        <end position="31"/>
    </location>
</feature>
<evidence type="ECO:0000250" key="1">
    <source>
        <dbReference type="UniProtKB" id="P09949"/>
    </source>
</evidence>
<evidence type="ECO:0000269" key="2">
    <source>
    </source>
</evidence>
<evidence type="ECO:0000303" key="3">
    <source>
    </source>
</evidence>
<evidence type="ECO:0000303" key="4">
    <source>
    </source>
</evidence>
<evidence type="ECO:0000305" key="5"/>
<comment type="function">
    <text evidence="1">Binds specifically to voltage-gated sodium channels (Nav), thereby delaying their inactivation during signal transduction.</text>
</comment>
<comment type="subcellular location">
    <subcellularLocation>
        <location evidence="5">Secreted</location>
    </subcellularLocation>
    <subcellularLocation>
        <location evidence="5">Nematocyst</location>
    </subcellularLocation>
</comment>
<comment type="PTM">
    <text evidence="2">Contains 4 disulfide bonds.</text>
</comment>
<comment type="mass spectrometry">
    <molecule>Delta-actitoxin-Dar1a</molecule>
</comment>
<comment type="mass spectrometry">
    <molecule>Delta-actitoxin-Dar1b</molecule>
</comment>
<comment type="miscellaneous">
    <text evidence="2">Da I is found as a major form, whereas Da II is found as a minor form.</text>
</comment>
<comment type="similarity">
    <text evidence="5">Belongs to the sea anemone short toxin (type III) family.</text>
</comment>
<keyword id="KW-0903">Direct protein sequencing</keyword>
<keyword id="KW-1015">Disulfide bond</keyword>
<keyword id="KW-0872">Ion channel impairing toxin</keyword>
<keyword id="KW-0166">Nematocyst</keyword>
<keyword id="KW-0528">Neurotoxin</keyword>
<keyword id="KW-0964">Secreted</keyword>
<keyword id="KW-0800">Toxin</keyword>
<keyword id="KW-0738">Voltage-gated sodium channel impairing toxin</keyword>
<sequence>AGGKATCCPCFMCSYTAGCPWGQCAHHCGCD</sequence>
<organism>
    <name type="scientific">Dofleinia armata</name>
    <name type="common">Armed anemone</name>
    <dbReference type="NCBI Taxonomy" id="1664552"/>
    <lineage>
        <taxon>Eukaryota</taxon>
        <taxon>Metazoa</taxon>
        <taxon>Cnidaria</taxon>
        <taxon>Anthozoa</taxon>
        <taxon>Hexacorallia</taxon>
        <taxon>Actiniaria</taxon>
        <taxon>Actiniidae</taxon>
        <taxon>Dofleinia</taxon>
    </lineage>
</organism>
<reference key="1">
    <citation type="journal article" date="2003" name="Toxicon">
        <title>Occurrence of type 3 sodium channel peptide toxins in two species of sea anemones (Dofleinia armata and Entacmaea ramsayi).</title>
        <authorList>
            <person name="Honma T."/>
            <person name="Iso T."/>
            <person name="Ishida M."/>
            <person name="Nagashima Y."/>
            <person name="Shiomi K."/>
        </authorList>
    </citation>
    <scope>PROTEIN SEQUENCE</scope>
    <scope>MASS SPECTROMETRY</scope>
</reference>
<reference key="2">
    <citation type="journal article" date="2012" name="Toxicon">
        <title>Development of a rational nomenclature for naming peptide and protein toxins from sea anemones.</title>
        <authorList>
            <person name="Oliveira J.S."/>
            <person name="Fuentes-Silva D."/>
            <person name="King G.F."/>
        </authorList>
    </citation>
    <scope>NOMENCLATURE</scope>
</reference>